<keyword id="KW-1015">Disulfide bond</keyword>
<keyword id="KW-0325">Glycoprotein</keyword>
<keyword id="KW-0372">Hormone</keyword>
<keyword id="KW-1185">Reference proteome</keyword>
<keyword id="KW-0964">Secreted</keyword>
<keyword id="KW-0732">Signal</keyword>
<accession>Q9LH43</accession>
<evidence type="ECO:0000250" key="1"/>
<evidence type="ECO:0000255" key="2"/>
<evidence type="ECO:0000305" key="3"/>
<comment type="function">
    <text evidence="1">Cell signaling peptide that may regulate plant stress, growth, and development. Mediates a rapid alkalinization of extracellular space by mediating a transient increase in the cytoplasmic Ca(2+) concentration leading to a calcium-dependent signaling events through a cell surface receptor and a concomitant activation of some intracellular mitogen-activated protein kinases (By similarity).</text>
</comment>
<comment type="subcellular location">
    <subcellularLocation>
        <location evidence="1">Secreted</location>
    </subcellularLocation>
</comment>
<comment type="similarity">
    <text evidence="3">Belongs to the plant rapid alkalinization factor (RALF) family.</text>
</comment>
<reference key="1">
    <citation type="journal article" date="2000" name="DNA Res.">
        <title>Structural analysis of Arabidopsis thaliana chromosome 3. II. Sequence features of the 4,251,695 bp regions covered by 90 P1, TAC and BAC clones.</title>
        <authorList>
            <person name="Kaneko T."/>
            <person name="Katoh T."/>
            <person name="Sato S."/>
            <person name="Nakamura Y."/>
            <person name="Asamizu E."/>
            <person name="Tabata S."/>
        </authorList>
    </citation>
    <scope>NUCLEOTIDE SEQUENCE [LARGE SCALE GENOMIC DNA]</scope>
    <source>
        <strain>cv. Columbia</strain>
    </source>
</reference>
<reference key="2">
    <citation type="journal article" date="2017" name="Plant J.">
        <title>Araport11: a complete reannotation of the Arabidopsis thaliana reference genome.</title>
        <authorList>
            <person name="Cheng C.Y."/>
            <person name="Krishnakumar V."/>
            <person name="Chan A.P."/>
            <person name="Thibaud-Nissen F."/>
            <person name="Schobel S."/>
            <person name="Town C.D."/>
        </authorList>
    </citation>
    <scope>GENOME REANNOTATION</scope>
    <source>
        <strain>cv. Columbia</strain>
    </source>
</reference>
<reference key="3">
    <citation type="journal article" date="2002" name="In Silico Biol.">
        <title>Peptomics, identification of novel cationic Arabidopsis peptides with conserved sequence motifs.</title>
        <authorList>
            <person name="Olsen A.N."/>
            <person name="Mundy J."/>
            <person name="Skriver K."/>
        </authorList>
    </citation>
    <scope>GENE FAMILY</scope>
    <scope>NOMENCLATURE</scope>
</reference>
<name>RLF27_ARATH</name>
<dbReference type="EMBL" id="AP002064">
    <property type="protein sequence ID" value="BAB01973.1"/>
    <property type="molecule type" value="Genomic_DNA"/>
</dbReference>
<dbReference type="EMBL" id="CP002686">
    <property type="protein sequence ID" value="AEE77610.1"/>
    <property type="molecule type" value="Genomic_DNA"/>
</dbReference>
<dbReference type="RefSeq" id="NP_189624.1">
    <property type="nucleotide sequence ID" value="NM_113904.3"/>
</dbReference>
<dbReference type="STRING" id="3702.Q9LH43"/>
<dbReference type="GlyCosmos" id="Q9LH43">
    <property type="glycosylation" value="1 site, No reported glycans"/>
</dbReference>
<dbReference type="GlyGen" id="Q9LH43">
    <property type="glycosylation" value="1 site"/>
</dbReference>
<dbReference type="PaxDb" id="3702-AT3G29780.1"/>
<dbReference type="EnsemblPlants" id="AT3G29780.1">
    <property type="protein sequence ID" value="AT3G29780.1"/>
    <property type="gene ID" value="AT3G29780"/>
</dbReference>
<dbReference type="GeneID" id="822684"/>
<dbReference type="Gramene" id="AT3G29780.1">
    <property type="protein sequence ID" value="AT3G29780.1"/>
    <property type="gene ID" value="AT3G29780"/>
</dbReference>
<dbReference type="KEGG" id="ath:AT3G29780"/>
<dbReference type="Araport" id="AT3G29780"/>
<dbReference type="TAIR" id="AT3G29780">
    <property type="gene designation" value="RALFL27"/>
</dbReference>
<dbReference type="eggNOG" id="ENOG502SWDV">
    <property type="taxonomic scope" value="Eukaryota"/>
</dbReference>
<dbReference type="HOGENOM" id="CLU_169216_0_0_1"/>
<dbReference type="InParanoid" id="Q9LH43"/>
<dbReference type="OMA" id="PTCDGRI"/>
<dbReference type="PRO" id="PR:Q9LH43"/>
<dbReference type="Proteomes" id="UP000006548">
    <property type="component" value="Chromosome 3"/>
</dbReference>
<dbReference type="ExpressionAtlas" id="Q9LH43">
    <property type="expression patterns" value="baseline and differential"/>
</dbReference>
<dbReference type="GO" id="GO:0048046">
    <property type="term" value="C:apoplast"/>
    <property type="evidence" value="ECO:0000250"/>
    <property type="project" value="TAIR"/>
</dbReference>
<dbReference type="GO" id="GO:0005179">
    <property type="term" value="F:hormone activity"/>
    <property type="evidence" value="ECO:0000250"/>
    <property type="project" value="UniProtKB"/>
</dbReference>
<dbReference type="GO" id="GO:0019722">
    <property type="term" value="P:calcium-mediated signaling"/>
    <property type="evidence" value="ECO:0000250"/>
    <property type="project" value="UniProtKB"/>
</dbReference>
<dbReference type="GO" id="GO:0007267">
    <property type="term" value="P:cell-cell signaling"/>
    <property type="evidence" value="ECO:0000250"/>
    <property type="project" value="TAIR"/>
</dbReference>
<dbReference type="GO" id="GO:0040008">
    <property type="term" value="P:regulation of growth"/>
    <property type="evidence" value="ECO:0007669"/>
    <property type="project" value="UniProtKB-ARBA"/>
</dbReference>
<dbReference type="InterPro" id="IPR008801">
    <property type="entry name" value="RALF"/>
</dbReference>
<dbReference type="InterPro" id="IPR039252">
    <property type="entry name" value="RALFL27"/>
</dbReference>
<dbReference type="PANTHER" id="PTHR39112:SF1">
    <property type="entry name" value="PROTEIN RALF-LIKE 27"/>
    <property type="match status" value="1"/>
</dbReference>
<dbReference type="PANTHER" id="PTHR39112">
    <property type="entry name" value="PROTEIN RALF-LIKE 27-RELATED"/>
    <property type="match status" value="1"/>
</dbReference>
<dbReference type="Pfam" id="PF05498">
    <property type="entry name" value="RALF"/>
    <property type="match status" value="1"/>
</dbReference>
<organism>
    <name type="scientific">Arabidopsis thaliana</name>
    <name type="common">Mouse-ear cress</name>
    <dbReference type="NCBI Taxonomy" id="3702"/>
    <lineage>
        <taxon>Eukaryota</taxon>
        <taxon>Viridiplantae</taxon>
        <taxon>Streptophyta</taxon>
        <taxon>Embryophyta</taxon>
        <taxon>Tracheophyta</taxon>
        <taxon>Spermatophyta</taxon>
        <taxon>Magnoliopsida</taxon>
        <taxon>eudicotyledons</taxon>
        <taxon>Gunneridae</taxon>
        <taxon>Pentapetalae</taxon>
        <taxon>rosids</taxon>
        <taxon>malvids</taxon>
        <taxon>Brassicales</taxon>
        <taxon>Brassicaceae</taxon>
        <taxon>Camelineae</taxon>
        <taxon>Arabidopsis</taxon>
    </lineage>
</organism>
<feature type="signal peptide" evidence="2">
    <location>
        <begin position="1"/>
        <end position="27"/>
    </location>
</feature>
<feature type="propeptide" id="PRO_0000420324" description="Removed in mature form" evidence="1">
    <location>
        <begin position="28"/>
        <end position="71"/>
    </location>
</feature>
<feature type="chain" id="PRO_0000420325" description="Protein RALF-like 27">
    <location>
        <begin position="72"/>
        <end position="117"/>
    </location>
</feature>
<feature type="glycosylation site" description="N-linked (GlcNAc...) asparagine" evidence="2">
    <location>
        <position position="31"/>
    </location>
</feature>
<feature type="disulfide bond" evidence="1">
    <location>
        <begin position="88"/>
        <end position="96"/>
    </location>
</feature>
<feature type="disulfide bond" evidence="1">
    <location>
        <begin position="107"/>
        <end position="113"/>
    </location>
</feature>
<protein>
    <recommendedName>
        <fullName>Protein RALF-like 27</fullName>
    </recommendedName>
</protein>
<sequence length="117" mass="12698">MTKTFFSFSFFFTSSLLLLLAATSATASTGNVTSGLRYDGCAPGDTVGECITATVEEEDEEGVEAVVRRILQQRKYLSYKTLQKQPTCDGRIAGNCIGTVNPKGATCTYYQRCKRAA</sequence>
<proteinExistence type="evidence at transcript level"/>
<gene>
    <name type="primary">RALFL27</name>
    <name type="ordered locus">At3g29780</name>
    <name type="ORF">T26G12.18</name>
</gene>